<keyword id="KW-0963">Cytoplasm</keyword>
<keyword id="KW-0521">NADP</keyword>
<keyword id="KW-0560">Oxidoreductase</keyword>
<keyword id="KW-0346">Stress response</keyword>
<comment type="function">
    <text evidence="4">Important as a means of generating NADPH for biosynthetic reactions. May be a main source of cytosolic NADPH for mannitol biosynthesis in leaves.</text>
</comment>
<comment type="catalytic activity">
    <reaction>
        <text>D-glyceraldehyde 3-phosphate + NADP(+) + H2O = (2R)-3-phosphoglycerate + NADPH + 2 H(+)</text>
        <dbReference type="Rhea" id="RHEA:14669"/>
        <dbReference type="ChEBI" id="CHEBI:15377"/>
        <dbReference type="ChEBI" id="CHEBI:15378"/>
        <dbReference type="ChEBI" id="CHEBI:57783"/>
        <dbReference type="ChEBI" id="CHEBI:58272"/>
        <dbReference type="ChEBI" id="CHEBI:58349"/>
        <dbReference type="ChEBI" id="CHEBI:59776"/>
        <dbReference type="EC" id="1.2.1.9"/>
    </reaction>
</comment>
<comment type="activity regulation">
    <text evidence="4">Competitive inhibition by NADPH, 3-phospho-D-glycerate and ATP.</text>
</comment>
<comment type="biophysicochemical properties">
    <kinetics>
        <KM evidence="4">6.8 uM for NADP(+)</KM>
        <KM evidence="4">29 uM for D-glyceraldehyde 3-phosphate</KM>
        <text>Measured at pH 7.7 and 30 degrees Celsius for all experiments.</text>
    </kinetics>
</comment>
<comment type="subcellular location">
    <subcellularLocation>
        <location>Cytoplasm</location>
        <location>Cytosol</location>
    </subcellularLocation>
</comment>
<comment type="developmental stage">
    <text evidence="4">Expression increases during leaf development. Not expressed in senescent leaves.</text>
</comment>
<comment type="induction">
    <text evidence="4">By salt stress.</text>
</comment>
<comment type="similarity">
    <text evidence="5">Belongs to the aldehyde dehydrogenase family.</text>
</comment>
<organism>
    <name type="scientific">Apium graveolens</name>
    <name type="common">Celery</name>
    <dbReference type="NCBI Taxonomy" id="4045"/>
    <lineage>
        <taxon>Eukaryota</taxon>
        <taxon>Viridiplantae</taxon>
        <taxon>Streptophyta</taxon>
        <taxon>Embryophyta</taxon>
        <taxon>Tracheophyta</taxon>
        <taxon>Spermatophyta</taxon>
        <taxon>Magnoliopsida</taxon>
        <taxon>eudicotyledons</taxon>
        <taxon>Gunneridae</taxon>
        <taxon>Pentapetalae</taxon>
        <taxon>asterids</taxon>
        <taxon>campanulids</taxon>
        <taxon>Apiales</taxon>
        <taxon>Apiaceae</taxon>
        <taxon>Apioideae</taxon>
        <taxon>apioid superclade</taxon>
        <taxon>Apieae</taxon>
        <taxon>Apium</taxon>
    </lineage>
</organism>
<sequence length="496" mass="53174">MAGSGVYADIIEGDVFKYYSDGEWKKSSSGKSVAIINPTTRMTQFKVQACTQEEVNKAMETAKKVQKQWAKTPLWKRAELLHKAAAILKEHKAAIADCLVKEIAKPAKDSVTEVVRSGDLVSYCAEEGVRLLGEGKFLVSDSFPGNERTKYCLTSKIPLGVILAIPPFNYPVNLAVSKIGPALIAGNALVLKPPTQGAVACLHMVHCFHLAGFPKGLISCITGKGSEIGDFLTMHPGVNCISFTGGDTGIAISKKAGMVPLQMELGGKDACIVLEDADLDLVASNVIKGGFSYSGQRCTAIKVILVMQSVADTLVEKVNAKVAKLTVGPPEDNSDITPVVSESSANFIEGLVKDAKEKGATFCQEYKREGNLIWPLLLDNVKPDMRIAWEEPFGPILPVIRINSAEEGIHHCNASNFGLQGCVFTRDINKAMLISDAMESGTIQINSAPARGPDHFPFQGLKDSGIGSQGITNSINMMTKIKTTVINLPSPSYTMG</sequence>
<evidence type="ECO:0000250" key="1"/>
<evidence type="ECO:0000255" key="2">
    <source>
        <dbReference type="PROSITE-ProRule" id="PRU10007"/>
    </source>
</evidence>
<evidence type="ECO:0000255" key="3">
    <source>
        <dbReference type="PROSITE-ProRule" id="PRU10008"/>
    </source>
</evidence>
<evidence type="ECO:0000269" key="4">
    <source>
    </source>
</evidence>
<evidence type="ECO:0000305" key="5"/>
<reference key="1">
    <citation type="journal article" date="2000" name="Plant Physiol.">
        <title>NADPH supply and mannitol biosynthesis. Characterization, cloning, and regulation of the non-reversible glyceraldehyde-3-phosphate dehydrogenase in celery leaves.</title>
        <authorList>
            <person name="Gao Z."/>
            <person name="Loescher W.H."/>
        </authorList>
    </citation>
    <scope>NUCLEOTIDE SEQUENCE [MRNA]</scope>
    <scope>FUNCTION</scope>
    <scope>ACTIVITY REGULATION</scope>
    <scope>BIOPHYSICOCHEMICAL PROPERTIES</scope>
    <scope>DEVELOPMENTAL STAGE</scope>
    <scope>INDUCTION</scope>
    <source>
        <strain>cv. Giant Pascal</strain>
        <tissue>Leaf</tissue>
    </source>
</reference>
<protein>
    <recommendedName>
        <fullName>NADP-dependent glyceraldehyde-3-phosphate dehydrogenase</fullName>
        <ecNumber>1.2.1.9</ecNumber>
    </recommendedName>
    <alternativeName>
        <fullName>Glyceraldehyde-3-phosphate dehydrogenase [NADP(+)]</fullName>
    </alternativeName>
    <alternativeName>
        <fullName>Non-phosphorylating glyceraldehyde 3-phosphate dehydrogenase</fullName>
    </alternativeName>
    <alternativeName>
        <fullName>Triosephosphate dehydrogenase</fullName>
    </alternativeName>
    <alternativeName>
        <fullName>nr-G3PDH</fullName>
    </alternativeName>
</protein>
<feature type="chain" id="PRO_0000256065" description="NADP-dependent glyceraldehyde-3-phosphate dehydrogenase">
    <location>
        <begin position="1"/>
        <end position="496"/>
    </location>
</feature>
<feature type="active site" description="Proton acceptor" evidence="2 3">
    <location>
        <position position="264"/>
    </location>
</feature>
<feature type="active site" description="Nucleophile" evidence="2 3">
    <location>
        <position position="298"/>
    </location>
</feature>
<feature type="binding site" evidence="1">
    <location>
        <position position="116"/>
    </location>
    <ligand>
        <name>substrate</name>
    </ligand>
</feature>
<feature type="binding site" evidence="1">
    <location>
        <begin position="169"/>
        <end position="170"/>
    </location>
    <ligand>
        <name>substrate</name>
    </ligand>
</feature>
<feature type="binding site" evidence="1">
    <location>
        <position position="192"/>
    </location>
    <ligand>
        <name>NADP(+)</name>
        <dbReference type="ChEBI" id="CHEBI:58349"/>
    </ligand>
</feature>
<feature type="binding site" evidence="1">
    <location>
        <position position="195"/>
    </location>
    <ligand>
        <name>NADP(+)</name>
        <dbReference type="ChEBI" id="CHEBI:58349"/>
    </ligand>
</feature>
<feature type="binding site" evidence="1">
    <location>
        <position position="230"/>
    </location>
    <ligand>
        <name>NADP(+)</name>
        <dbReference type="ChEBI" id="CHEBI:58349"/>
    </ligand>
</feature>
<feature type="binding site" evidence="1">
    <location>
        <begin position="245"/>
        <end position="249"/>
    </location>
    <ligand>
        <name>NAD(+)</name>
        <dbReference type="ChEBI" id="CHEBI:57540"/>
    </ligand>
</feature>
<feature type="binding site" evidence="1">
    <location>
        <begin position="297"/>
        <end position="299"/>
    </location>
    <ligand>
        <name>substrate</name>
    </ligand>
</feature>
<feature type="binding site" evidence="1">
    <location>
        <position position="391"/>
    </location>
    <ligand>
        <name>NADP(+)</name>
        <dbReference type="ChEBI" id="CHEBI:58349"/>
    </ligand>
</feature>
<feature type="binding site" evidence="1">
    <location>
        <position position="451"/>
    </location>
    <ligand>
        <name>substrate</name>
    </ligand>
</feature>
<feature type="site" description="Transition state stabilizer" evidence="1">
    <location>
        <position position="169"/>
    </location>
</feature>
<accession>Q9SNX8</accession>
<proteinExistence type="evidence at protein level"/>
<dbReference type="EC" id="1.2.1.9"/>
<dbReference type="EMBL" id="AF196292">
    <property type="protein sequence ID" value="AAF08296.1"/>
    <property type="molecule type" value="mRNA"/>
</dbReference>
<dbReference type="SMR" id="Q9SNX8"/>
<dbReference type="SABIO-RK" id="Q9SNX8"/>
<dbReference type="GO" id="GO:0005829">
    <property type="term" value="C:cytosol"/>
    <property type="evidence" value="ECO:0007669"/>
    <property type="project" value="UniProtKB-SubCell"/>
</dbReference>
<dbReference type="GO" id="GO:0008886">
    <property type="term" value="F:glyceraldehyde-3-phosphate dehydrogenase (NADP+) (non-phosphorylating) activity"/>
    <property type="evidence" value="ECO:0007669"/>
    <property type="project" value="UniProtKB-EC"/>
</dbReference>
<dbReference type="GO" id="GO:0008911">
    <property type="term" value="F:lactaldehyde dehydrogenase (NAD+) activity"/>
    <property type="evidence" value="ECO:0007669"/>
    <property type="project" value="TreeGrafter"/>
</dbReference>
<dbReference type="CDD" id="cd07082">
    <property type="entry name" value="ALDH_F11_NP-GAPDH"/>
    <property type="match status" value="1"/>
</dbReference>
<dbReference type="FunFam" id="3.40.309.10:FF:000016">
    <property type="entry name" value="NADP-dependent glyceraldehyde-3-phosphate dehydrogenase"/>
    <property type="match status" value="1"/>
</dbReference>
<dbReference type="FunFam" id="3.40.605.10:FF:000013">
    <property type="entry name" value="NADP-dependent glyceraldehyde-3-phosphate dehydrogenase"/>
    <property type="match status" value="1"/>
</dbReference>
<dbReference type="Gene3D" id="3.40.605.10">
    <property type="entry name" value="Aldehyde Dehydrogenase, Chain A, domain 1"/>
    <property type="match status" value="1"/>
</dbReference>
<dbReference type="Gene3D" id="3.40.309.10">
    <property type="entry name" value="Aldehyde Dehydrogenase, Chain A, domain 2"/>
    <property type="match status" value="1"/>
</dbReference>
<dbReference type="InterPro" id="IPR016161">
    <property type="entry name" value="Ald_DH/histidinol_DH"/>
</dbReference>
<dbReference type="InterPro" id="IPR016163">
    <property type="entry name" value="Ald_DH_C"/>
</dbReference>
<dbReference type="InterPro" id="IPR016160">
    <property type="entry name" value="Ald_DH_CS_CYS"/>
</dbReference>
<dbReference type="InterPro" id="IPR029510">
    <property type="entry name" value="Ald_DH_CS_GLU"/>
</dbReference>
<dbReference type="InterPro" id="IPR016162">
    <property type="entry name" value="Ald_DH_N"/>
</dbReference>
<dbReference type="InterPro" id="IPR015590">
    <property type="entry name" value="Aldehyde_DH_dom"/>
</dbReference>
<dbReference type="InterPro" id="IPR051020">
    <property type="entry name" value="ALDH-related_metabolic_enz"/>
</dbReference>
<dbReference type="PANTHER" id="PTHR42991">
    <property type="entry name" value="ALDEHYDE DEHYDROGENASE"/>
    <property type="match status" value="1"/>
</dbReference>
<dbReference type="PANTHER" id="PTHR42991:SF1">
    <property type="entry name" value="ALDEHYDE DEHYDROGENASE"/>
    <property type="match status" value="1"/>
</dbReference>
<dbReference type="Pfam" id="PF00171">
    <property type="entry name" value="Aldedh"/>
    <property type="match status" value="1"/>
</dbReference>
<dbReference type="SUPFAM" id="SSF53720">
    <property type="entry name" value="ALDH-like"/>
    <property type="match status" value="1"/>
</dbReference>
<dbReference type="PROSITE" id="PS00070">
    <property type="entry name" value="ALDEHYDE_DEHYDR_CYS"/>
    <property type="match status" value="1"/>
</dbReference>
<dbReference type="PROSITE" id="PS00687">
    <property type="entry name" value="ALDEHYDE_DEHYDR_GLU"/>
    <property type="match status" value="1"/>
</dbReference>
<name>GAPN_APIGR</name>